<keyword id="KW-0963">Cytoplasm</keyword>
<keyword id="KW-0433">Leucine-rich repeat</keyword>
<keyword id="KW-1185">Reference proteome</keyword>
<keyword id="KW-0677">Repeat</keyword>
<proteinExistence type="evidence at transcript level"/>
<sequence>MAAAAEAAAEPLVSGLARLLQDTGDLVLDGSSTLTLLTPTLQHLTRVFEQHLGSRNQHRGFVALPSHPAETTAILQAQFLFDMLQKTHSLKLIHVPNCALQSTVKIFPFKSLRHLELRSVPPHCLRGLRFVYSQLESLTCSKCVSTLEEIISACGGDLSCALPWLELQTVNFSYNSITALDDSLQLLNALRVLDLSHNKVQDCEHYLTTLSELEYLNLAYNFLSKVPNLGIFSQSKLLTLILRNNELDSINGVEQLVNLQHLDVAYNLLLEHAQLAPLSTLHYLKKLHLEGNPLWFHQNHRSATLVHVSPRAASSNFLLDGEPLSSSDLMHLPKLVPSVSQSIHTSTSEKTILDRNALDSSCAADFSDSQSPAENVAVRLPRKKGKGKVKVRRASISEPSDTEHESQALPFSAGLVLQHQKEMERMDSFRDRFGVDWLQYKRLEEHNQVSVICRSRSADETTGRPAAVDLQSESFDPKQVKPRLSPKESSPAFHNAGAEEEPEVQPGEPPGGEQREEEADELMLGEEEDEKPEVDLCQPVLVSQIEGEGDPESDWIFLRVTARHVIEVELKAARVLHKLELKCLQKIETSEMTWKRMDLERVFPVLTLHFTYIRKDRQKRKYVVLDDCPEQCLQCVLEVLSPVVEENWRNQDQEKESLRLQCLKCKHEFLQSLAPWQQGPYPAETGDTKNLETLVALNQDASAAGEPIACPSCSSDHVVILPSEVSSSTPVPPSHDGTSEDLSDSALEGGSQQEGPEEVPALPRESGKFYIGGEDSSEMDTSNSTRTPELSGEHDSTIQSSSHSTDGGYGKKEQGMKSQYLSLSHRDTNGGSLMGSYRYSASRGPTSSQLSMTSDSEETWNLSPSANSALNKRDFRSVDHRLKLYLDMEVFEENDEEFQCFLKVTMVKFGRQGEFLSILVASNLRIYVLEVTGVIRGQPADWLKKDDSHYLSDISHLEVGLCHQSLRMEFENPKASYNLLIRSQSCCDQFLQTLTYLMQELPSKHRSKVKEIPTVEMNPQHWLWPLLDSKNTDSAAAGGTCFFYLLAYLIQEYSAPNWTQFKLRPCCQIDRTN</sequence>
<reference key="1">
    <citation type="journal article" date="2005" name="Genome Biol.">
        <title>Full-length cDNAs from chicken bursal lymphocytes to facilitate gene function analysis.</title>
        <authorList>
            <person name="Caldwell R.B."/>
            <person name="Kierzek A.M."/>
            <person name="Arakawa H."/>
            <person name="Bezzubov Y."/>
            <person name="Zaim J."/>
            <person name="Fiedler P."/>
            <person name="Kutter S."/>
            <person name="Blagodatski A."/>
            <person name="Kostovska D."/>
            <person name="Koter M."/>
            <person name="Plachy J."/>
            <person name="Carninci P."/>
            <person name="Hayashizaki Y."/>
            <person name="Buerstedde J.-M."/>
        </authorList>
    </citation>
    <scope>NUCLEOTIDE SEQUENCE [LARGE SCALE MRNA]</scope>
    <source>
        <strain>CB</strain>
        <tissue>Bursa of Fabricius</tissue>
    </source>
</reference>
<gene>
    <name type="primary">STK11IP</name>
    <name type="ORF">RCJMB04_2g8</name>
</gene>
<protein>
    <recommendedName>
        <fullName>Serine/threonine-protein kinase 11-interacting protein</fullName>
    </recommendedName>
</protein>
<comment type="subcellular location">
    <subcellularLocation>
        <location evidence="1">Cytoplasm</location>
    </subcellularLocation>
</comment>
<comment type="similarity">
    <text evidence="3">Belongs to the STK11IP family.</text>
</comment>
<accession>Q5F479</accession>
<feature type="chain" id="PRO_0000317464" description="Serine/threonine-protein kinase 11-interacting protein">
    <location>
        <begin position="1"/>
        <end position="1073"/>
    </location>
</feature>
<feature type="repeat" description="LRR 1">
    <location>
        <begin position="166"/>
        <end position="187"/>
    </location>
</feature>
<feature type="repeat" description="LRR 2">
    <location>
        <begin position="189"/>
        <end position="210"/>
    </location>
</feature>
<feature type="repeat" description="LRR 3">
    <location>
        <begin position="212"/>
        <end position="233"/>
    </location>
</feature>
<feature type="repeat" description="LRR 4">
    <location>
        <begin position="236"/>
        <end position="257"/>
    </location>
</feature>
<feature type="repeat" description="LRR 5">
    <location>
        <begin position="258"/>
        <end position="279"/>
    </location>
</feature>
<feature type="repeat" description="LRR 6">
    <location>
        <begin position="283"/>
        <end position="304"/>
    </location>
</feature>
<feature type="region of interest" description="Disordered" evidence="2">
    <location>
        <begin position="389"/>
        <end position="409"/>
    </location>
</feature>
<feature type="region of interest" description="Disordered" evidence="2">
    <location>
        <begin position="455"/>
        <end position="533"/>
    </location>
</feature>
<feature type="region of interest" description="Disordered" evidence="2">
    <location>
        <begin position="724"/>
        <end position="817"/>
    </location>
</feature>
<feature type="region of interest" description="Disordered" evidence="2">
    <location>
        <begin position="834"/>
        <end position="859"/>
    </location>
</feature>
<feature type="compositionally biased region" description="Acidic residues" evidence="2">
    <location>
        <begin position="515"/>
        <end position="532"/>
    </location>
</feature>
<feature type="compositionally biased region" description="Polar residues" evidence="2">
    <location>
        <begin position="779"/>
        <end position="788"/>
    </location>
</feature>
<feature type="compositionally biased region" description="Polar residues" evidence="2">
    <location>
        <begin position="843"/>
        <end position="859"/>
    </location>
</feature>
<evidence type="ECO:0000250" key="1"/>
<evidence type="ECO:0000256" key="2">
    <source>
        <dbReference type="SAM" id="MobiDB-lite"/>
    </source>
</evidence>
<evidence type="ECO:0000305" key="3"/>
<dbReference type="EMBL" id="AJ851421">
    <property type="protein sequence ID" value="CAH65055.1"/>
    <property type="molecule type" value="mRNA"/>
</dbReference>
<dbReference type="RefSeq" id="NP_001012936.1">
    <property type="nucleotide sequence ID" value="NM_001012918.1"/>
</dbReference>
<dbReference type="SMR" id="Q5F479"/>
<dbReference type="FunCoup" id="Q5F479">
    <property type="interactions" value="1487"/>
</dbReference>
<dbReference type="STRING" id="9031.ENSGALP00000043632"/>
<dbReference type="GlyGen" id="Q5F479">
    <property type="glycosylation" value="1 site"/>
</dbReference>
<dbReference type="PaxDb" id="9031-ENSGALP00000018298"/>
<dbReference type="KEGG" id="gga:424195"/>
<dbReference type="VEuPathDB" id="HostDB:geneid_424195"/>
<dbReference type="eggNOG" id="KOG1859">
    <property type="taxonomic scope" value="Eukaryota"/>
</dbReference>
<dbReference type="InParanoid" id="Q5F479"/>
<dbReference type="OrthoDB" id="7451790at2759"/>
<dbReference type="PhylomeDB" id="Q5F479"/>
<dbReference type="PRO" id="PR:Q5F479"/>
<dbReference type="Proteomes" id="UP000000539">
    <property type="component" value="Unassembled WGS sequence"/>
</dbReference>
<dbReference type="GO" id="GO:0005737">
    <property type="term" value="C:cytoplasm"/>
    <property type="evidence" value="ECO:0000318"/>
    <property type="project" value="GO_Central"/>
</dbReference>
<dbReference type="GO" id="GO:0008104">
    <property type="term" value="P:protein localization"/>
    <property type="evidence" value="ECO:0000318"/>
    <property type="project" value="GO_Central"/>
</dbReference>
<dbReference type="FunFam" id="3.80.10.10:FF:000658">
    <property type="entry name" value="Serine/threonine-protein kinase 11-interacting protein"/>
    <property type="match status" value="1"/>
</dbReference>
<dbReference type="FunFam" id="3.80.10.10:FF:001219">
    <property type="entry name" value="Serine/threonine-protein kinase 11-interacting protein"/>
    <property type="match status" value="1"/>
</dbReference>
<dbReference type="Gene3D" id="3.80.10.10">
    <property type="entry name" value="Ribonuclease Inhibitor"/>
    <property type="match status" value="2"/>
</dbReference>
<dbReference type="InterPro" id="IPR001611">
    <property type="entry name" value="Leu-rich_rpt"/>
</dbReference>
<dbReference type="InterPro" id="IPR031782">
    <property type="entry name" value="LIP1_N"/>
</dbReference>
<dbReference type="InterPro" id="IPR032675">
    <property type="entry name" value="LRR_dom_sf"/>
</dbReference>
<dbReference type="PANTHER" id="PTHR15454">
    <property type="entry name" value="NISCHARIN RELATED"/>
    <property type="match status" value="1"/>
</dbReference>
<dbReference type="PANTHER" id="PTHR15454:SF69">
    <property type="entry name" value="SERINE_THREONINE-PROTEIN KINASE 11-INTERACTING PROTEIN"/>
    <property type="match status" value="1"/>
</dbReference>
<dbReference type="Pfam" id="PF15904">
    <property type="entry name" value="LIP1"/>
    <property type="match status" value="1"/>
</dbReference>
<dbReference type="Pfam" id="PF23142">
    <property type="entry name" value="PH_PLEKHM2"/>
    <property type="match status" value="1"/>
</dbReference>
<dbReference type="Pfam" id="PF25357">
    <property type="entry name" value="PH_S11IP"/>
    <property type="match status" value="1"/>
</dbReference>
<dbReference type="SUPFAM" id="SSF52075">
    <property type="entry name" value="Outer arm dynein light chain 1"/>
    <property type="match status" value="1"/>
</dbReference>
<dbReference type="PROSITE" id="PS51450">
    <property type="entry name" value="LRR"/>
    <property type="match status" value="5"/>
</dbReference>
<organism>
    <name type="scientific">Gallus gallus</name>
    <name type="common">Chicken</name>
    <dbReference type="NCBI Taxonomy" id="9031"/>
    <lineage>
        <taxon>Eukaryota</taxon>
        <taxon>Metazoa</taxon>
        <taxon>Chordata</taxon>
        <taxon>Craniata</taxon>
        <taxon>Vertebrata</taxon>
        <taxon>Euteleostomi</taxon>
        <taxon>Archelosauria</taxon>
        <taxon>Archosauria</taxon>
        <taxon>Dinosauria</taxon>
        <taxon>Saurischia</taxon>
        <taxon>Theropoda</taxon>
        <taxon>Coelurosauria</taxon>
        <taxon>Aves</taxon>
        <taxon>Neognathae</taxon>
        <taxon>Galloanserae</taxon>
        <taxon>Galliformes</taxon>
        <taxon>Phasianidae</taxon>
        <taxon>Phasianinae</taxon>
        <taxon>Gallus</taxon>
    </lineage>
</organism>
<name>S11IP_CHICK</name>